<feature type="chain" id="PRO_0000162090" description="tRNA-dihydrouridine synthase B">
    <location>
        <begin position="1"/>
        <end position="321"/>
    </location>
</feature>
<feature type="active site" description="Proton donor" evidence="1">
    <location>
        <position position="100"/>
    </location>
</feature>
<feature type="binding site" evidence="1">
    <location>
        <begin position="16"/>
        <end position="18"/>
    </location>
    <ligand>
        <name>FMN</name>
        <dbReference type="ChEBI" id="CHEBI:58210"/>
    </ligand>
</feature>
<feature type="binding site" evidence="1">
    <location>
        <position position="70"/>
    </location>
    <ligand>
        <name>FMN</name>
        <dbReference type="ChEBI" id="CHEBI:58210"/>
    </ligand>
</feature>
<feature type="binding site" evidence="1">
    <location>
        <position position="139"/>
    </location>
    <ligand>
        <name>FMN</name>
        <dbReference type="ChEBI" id="CHEBI:58210"/>
    </ligand>
</feature>
<feature type="binding site" evidence="1">
    <location>
        <begin position="200"/>
        <end position="202"/>
    </location>
    <ligand>
        <name>FMN</name>
        <dbReference type="ChEBI" id="CHEBI:58210"/>
    </ligand>
</feature>
<feature type="binding site" evidence="1">
    <location>
        <begin position="224"/>
        <end position="225"/>
    </location>
    <ligand>
        <name>FMN</name>
        <dbReference type="ChEBI" id="CHEBI:58210"/>
    </ligand>
</feature>
<proteinExistence type="inferred from homology"/>
<name>DUSB_KLEPN</name>
<sequence length="321" mass="35804">MRIGHYQLRNRLIAAPMAGITDRPFRTLCYEMGAGLTVSEMMSSNPQVWESDKSRLRMVHVDEPGIRTVQIAGSVPKEMAAAARINVESGAQIIDINMGCPAKKVNRKLAGSALLQYPDQVKSILTAVVKAVDVPVTLKIRTGWEPEHRNCVEIAQLAEECGIQALTIHGRTRACLFNGDAEYDSIRAVKQKVSIPVIANGDITDPLKARAVLDYTGADALMIGRAAQGRPWIFREIQHYLDTGELLPPLPLAEVKRLLCAHVRELHGFYGQAKGYRIARKHVSWYLQEHAPDDQFRRTFNAIEDSSEQLEALEAYFENFA</sequence>
<gene>
    <name evidence="1" type="primary">dusB</name>
</gene>
<organism>
    <name type="scientific">Klebsiella pneumoniae</name>
    <dbReference type="NCBI Taxonomy" id="573"/>
    <lineage>
        <taxon>Bacteria</taxon>
        <taxon>Pseudomonadati</taxon>
        <taxon>Pseudomonadota</taxon>
        <taxon>Gammaproteobacteria</taxon>
        <taxon>Enterobacterales</taxon>
        <taxon>Enterobacteriaceae</taxon>
        <taxon>Klebsiella/Raoultella group</taxon>
        <taxon>Klebsiella</taxon>
        <taxon>Klebsiella pneumoniae complex</taxon>
    </lineage>
</organism>
<reference key="1">
    <citation type="submission" date="1997-12" db="EMBL/GenBank/DDBJ databases">
        <authorList>
            <person name="Beach M.B."/>
            <person name="Osuna R."/>
        </authorList>
    </citation>
    <scope>NUCLEOTIDE SEQUENCE [GENOMIC DNA]</scope>
</reference>
<dbReference type="EC" id="1.3.1.-" evidence="1"/>
<dbReference type="EMBL" id="AF040380">
    <property type="protein sequence ID" value="AAC77888.1"/>
    <property type="molecule type" value="Genomic_DNA"/>
</dbReference>
<dbReference type="SMR" id="O52536"/>
<dbReference type="GO" id="GO:0050660">
    <property type="term" value="F:flavin adenine dinucleotide binding"/>
    <property type="evidence" value="ECO:0007669"/>
    <property type="project" value="InterPro"/>
</dbReference>
<dbReference type="GO" id="GO:0010181">
    <property type="term" value="F:FMN binding"/>
    <property type="evidence" value="ECO:0007669"/>
    <property type="project" value="UniProtKB-UniRule"/>
</dbReference>
<dbReference type="GO" id="GO:0000049">
    <property type="term" value="F:tRNA binding"/>
    <property type="evidence" value="ECO:0007669"/>
    <property type="project" value="UniProtKB-UniRule"/>
</dbReference>
<dbReference type="GO" id="GO:0017150">
    <property type="term" value="F:tRNA dihydrouridine synthase activity"/>
    <property type="evidence" value="ECO:0007669"/>
    <property type="project" value="UniProtKB-UniRule"/>
</dbReference>
<dbReference type="CDD" id="cd02801">
    <property type="entry name" value="DUS_like_FMN"/>
    <property type="match status" value="1"/>
</dbReference>
<dbReference type="FunFam" id="1.10.1200.80:FF:000001">
    <property type="entry name" value="tRNA-dihydrouridine synthase B"/>
    <property type="match status" value="1"/>
</dbReference>
<dbReference type="FunFam" id="3.20.20.70:FF:000051">
    <property type="entry name" value="tRNA-dihydrouridine synthase B"/>
    <property type="match status" value="1"/>
</dbReference>
<dbReference type="Gene3D" id="3.20.20.70">
    <property type="entry name" value="Aldolase class I"/>
    <property type="match status" value="1"/>
</dbReference>
<dbReference type="Gene3D" id="1.10.1200.80">
    <property type="entry name" value="Putative flavin oxidoreducatase, domain 2"/>
    <property type="match status" value="1"/>
</dbReference>
<dbReference type="HAMAP" id="MF_02042">
    <property type="entry name" value="DusB_subfam"/>
    <property type="match status" value="1"/>
</dbReference>
<dbReference type="InterPro" id="IPR013785">
    <property type="entry name" value="Aldolase_TIM"/>
</dbReference>
<dbReference type="InterPro" id="IPR035587">
    <property type="entry name" value="DUS-like_FMN-bd"/>
</dbReference>
<dbReference type="InterPro" id="IPR001269">
    <property type="entry name" value="DUS_fam"/>
</dbReference>
<dbReference type="InterPro" id="IPR032887">
    <property type="entry name" value="DusB"/>
</dbReference>
<dbReference type="InterPro" id="IPR004652">
    <property type="entry name" value="DusB-like"/>
</dbReference>
<dbReference type="InterPro" id="IPR024036">
    <property type="entry name" value="tRNA-dHydroUridine_Synthase_C"/>
</dbReference>
<dbReference type="InterPro" id="IPR018517">
    <property type="entry name" value="tRNA_hU_synthase_CS"/>
</dbReference>
<dbReference type="NCBIfam" id="TIGR00737">
    <property type="entry name" value="nifR3_yhdG"/>
    <property type="match status" value="1"/>
</dbReference>
<dbReference type="PANTHER" id="PTHR45846">
    <property type="entry name" value="TRNA-DIHYDROURIDINE(47) SYNTHASE [NAD(P)(+)]-LIKE"/>
    <property type="match status" value="1"/>
</dbReference>
<dbReference type="PANTHER" id="PTHR45846:SF1">
    <property type="entry name" value="TRNA-DIHYDROURIDINE(47) SYNTHASE [NAD(P)(+)]-LIKE"/>
    <property type="match status" value="1"/>
</dbReference>
<dbReference type="Pfam" id="PF01207">
    <property type="entry name" value="Dus"/>
    <property type="match status" value="1"/>
</dbReference>
<dbReference type="PIRSF" id="PIRSF006621">
    <property type="entry name" value="Dus"/>
    <property type="match status" value="1"/>
</dbReference>
<dbReference type="SUPFAM" id="SSF51395">
    <property type="entry name" value="FMN-linked oxidoreductases"/>
    <property type="match status" value="1"/>
</dbReference>
<dbReference type="PROSITE" id="PS01136">
    <property type="entry name" value="UPF0034"/>
    <property type="match status" value="1"/>
</dbReference>
<accession>O52536</accession>
<protein>
    <recommendedName>
        <fullName evidence="1">tRNA-dihydrouridine synthase B</fullName>
        <ecNumber evidence="1">1.3.1.-</ecNumber>
    </recommendedName>
</protein>
<keyword id="KW-0285">Flavoprotein</keyword>
<keyword id="KW-0288">FMN</keyword>
<keyword id="KW-0521">NADP</keyword>
<keyword id="KW-0560">Oxidoreductase</keyword>
<keyword id="KW-0694">RNA-binding</keyword>
<keyword id="KW-0819">tRNA processing</keyword>
<keyword id="KW-0820">tRNA-binding</keyword>
<evidence type="ECO:0000255" key="1">
    <source>
        <dbReference type="HAMAP-Rule" id="MF_02042"/>
    </source>
</evidence>
<comment type="function">
    <text evidence="1">Catalyzes the synthesis of 5,6-dihydrouridine (D), a modified base found in the D-loop of most tRNAs, via the reduction of the C5-C6 double bond in target uridines.</text>
</comment>
<comment type="catalytic activity">
    <reaction evidence="1">
        <text>a 5,6-dihydrouridine in tRNA + NAD(+) = a uridine in tRNA + NADH + H(+)</text>
        <dbReference type="Rhea" id="RHEA:54452"/>
        <dbReference type="Rhea" id="RHEA-COMP:13339"/>
        <dbReference type="Rhea" id="RHEA-COMP:13887"/>
        <dbReference type="ChEBI" id="CHEBI:15378"/>
        <dbReference type="ChEBI" id="CHEBI:57540"/>
        <dbReference type="ChEBI" id="CHEBI:57945"/>
        <dbReference type="ChEBI" id="CHEBI:65315"/>
        <dbReference type="ChEBI" id="CHEBI:74443"/>
    </reaction>
</comment>
<comment type="catalytic activity">
    <reaction evidence="1">
        <text>a 5,6-dihydrouridine in tRNA + NADP(+) = a uridine in tRNA + NADPH + H(+)</text>
        <dbReference type="Rhea" id="RHEA:23624"/>
        <dbReference type="Rhea" id="RHEA-COMP:13339"/>
        <dbReference type="Rhea" id="RHEA-COMP:13887"/>
        <dbReference type="ChEBI" id="CHEBI:15378"/>
        <dbReference type="ChEBI" id="CHEBI:57783"/>
        <dbReference type="ChEBI" id="CHEBI:58349"/>
        <dbReference type="ChEBI" id="CHEBI:65315"/>
        <dbReference type="ChEBI" id="CHEBI:74443"/>
    </reaction>
</comment>
<comment type="cofactor">
    <cofactor evidence="1">
        <name>FMN</name>
        <dbReference type="ChEBI" id="CHEBI:58210"/>
    </cofactor>
</comment>
<comment type="similarity">
    <text evidence="1">Belongs to the Dus family. DusB subfamily.</text>
</comment>